<protein>
    <recommendedName>
        <fullName>Probable subtilase-type serine protease DR_A0283</fullName>
        <ecNumber>3.4.21.-</ecNumber>
    </recommendedName>
</protein>
<keyword id="KW-0903">Direct protein sequencing</keyword>
<keyword id="KW-0378">Hydrolase</keyword>
<keyword id="KW-0645">Protease</keyword>
<keyword id="KW-1185">Reference proteome</keyword>
<keyword id="KW-0964">Secreted</keyword>
<keyword id="KW-0720">Serine protease</keyword>
<keyword id="KW-0732">Signal</keyword>
<proteinExistence type="evidence at protein level"/>
<comment type="subcellular location">
    <subcellularLocation>
        <location evidence="4">Secreted</location>
    </subcellularLocation>
</comment>
<comment type="similarity">
    <text evidence="4">Belongs to the peptidase S8 family.</text>
</comment>
<evidence type="ECO:0000255" key="1"/>
<evidence type="ECO:0000255" key="2">
    <source>
        <dbReference type="PROSITE-ProRule" id="PRU01240"/>
    </source>
</evidence>
<evidence type="ECO:0000269" key="3">
    <source>
    </source>
</evidence>
<evidence type="ECO:0000305" key="4"/>
<feature type="signal peptide" evidence="1">
    <location>
        <begin position="1"/>
        <end position="22"/>
    </location>
</feature>
<feature type="propeptide" id="PRO_0000027168" evidence="1 3">
    <location>
        <begin position="23"/>
        <end position="148"/>
    </location>
</feature>
<feature type="chain" id="PRO_0000027169" description="Probable subtilase-type serine protease DR_A0283">
    <location>
        <begin position="149"/>
        <end position="728"/>
    </location>
</feature>
<feature type="domain" description="Peptidase S8" evidence="2">
    <location>
        <begin position="159"/>
        <end position="471"/>
    </location>
</feature>
<feature type="active site" description="Charge relay system" evidence="2">
    <location>
        <position position="188"/>
    </location>
</feature>
<feature type="active site" description="Charge relay system" evidence="2">
    <location>
        <position position="242"/>
    </location>
</feature>
<feature type="active site" description="Charge relay system" evidence="2">
    <location>
        <position position="412"/>
    </location>
</feature>
<gene>
    <name type="ordered locus">DR_A0283</name>
</gene>
<organism>
    <name type="scientific">Deinococcus radiodurans (strain ATCC 13939 / DSM 20539 / JCM 16871 / CCUG 27074 / LMG 4051 / NBRC 15346 / NCIMB 9279 / VKM B-1422 / R1)</name>
    <dbReference type="NCBI Taxonomy" id="243230"/>
    <lineage>
        <taxon>Bacteria</taxon>
        <taxon>Thermotogati</taxon>
        <taxon>Deinococcota</taxon>
        <taxon>Deinococci</taxon>
        <taxon>Deinococcales</taxon>
        <taxon>Deinococcaceae</taxon>
        <taxon>Deinococcus</taxon>
    </lineage>
</organism>
<name>SUB2_DEIRA</name>
<sequence length="728" mass="76755">MPGALPMKKISLAVLSLTTLLAACGQPQTSPQSPAASAPSVAVPRTHALDIDPAQVVTTKNGDMYVRNQLVVNLRGHSADALADQLGGRVLDQLPELDVALIELPQGKDARSVGVALMREGQVLYAAAQTVQRQIEPVRTAQDQLGAQAVNQVFDTLPQYALDSNHLHAKAAWDAGFTGKGVKVGVIDDPSDVSHPDLRPNWAGKAYDPATNTTYTTVQGWIDAIDGFDGKVDNKVDPGIEHGTAVASTIAAAKNGQGIVGVAPDSKFYTAAIFQPGFIGDYLVARSVIWTVNQGAQVINNSWGGTGYSPLLKQAFDYALERDITVVVSAGNSYREEWRNPAQLPGVIASAALDINNDKAGFSTYGRHVSVAAPGVDVMLASPLFINADGTRKTGGYTKDGGSGYQLISGTSFSGPYTSGVAAVILGAKPDLDPHQVRRLMEETADGSVGSNKAGFDRETGYGLIRMDKLADRLKGSNMPQKGGAGRVKVEIQTPGGYVPGILADVILEGDGADGAVYAVQTDSDGYANFVSIAPGTYTLRVATPDLTLTGGQSDERDTYVGKLTVTSGSVLSTVAPQRVVLVKGAVDLNPVDPYEPNDTMAEAKPISYGKMTELAYIFGKPRDVDFFSFTGKAGDNIQADVHARTAIGGSLDSFLVLRDASGKNLAYNDDANGQDSVITFKLPADGTYFLEVSSCNILCKSNGDDASKGQDDDSPFNKYVLELQLLK</sequence>
<reference key="1">
    <citation type="journal article" date="1999" name="Science">
        <title>Genome sequence of the radioresistant bacterium Deinococcus radiodurans R1.</title>
        <authorList>
            <person name="White O."/>
            <person name="Eisen J.A."/>
            <person name="Heidelberg J.F."/>
            <person name="Hickey E.K."/>
            <person name="Peterson J.D."/>
            <person name="Dodson R.J."/>
            <person name="Haft D.H."/>
            <person name="Gwinn M.L."/>
            <person name="Nelson W.C."/>
            <person name="Richardson D.L."/>
            <person name="Moffat K.S."/>
            <person name="Qin H."/>
            <person name="Jiang L."/>
            <person name="Pamphile W."/>
            <person name="Crosby M."/>
            <person name="Shen M."/>
            <person name="Vamathevan J.J."/>
            <person name="Lam P."/>
            <person name="McDonald L.A."/>
            <person name="Utterback T.R."/>
            <person name="Zalewski C."/>
            <person name="Makarova K.S."/>
            <person name="Aravind L."/>
            <person name="Daly M.J."/>
            <person name="Minton K.W."/>
            <person name="Fleischmann R.D."/>
            <person name="Ketchum K.A."/>
            <person name="Nelson K.E."/>
            <person name="Salzberg S.L."/>
            <person name="Smith H.O."/>
            <person name="Venter J.C."/>
            <person name="Fraser C.M."/>
        </authorList>
    </citation>
    <scope>NUCLEOTIDE SEQUENCE [LARGE SCALE GENOMIC DNA]</scope>
    <source>
        <strain>ATCC 13939 / DSM 20539 / JCM 16871 / CCUG 27074 / LMG 4051 / NBRC 15346 / NCIMB 9279 / VKM B-1422 / R1</strain>
    </source>
</reference>
<reference key="2">
    <citation type="journal article" date="2004" name="Biochem. Biophys. Res. Commun.">
        <title>Protein recycling is a major component of post-irradiation recovery in Deinococcus radiodurans strain R1.</title>
        <authorList>
            <person name="Joshi B.S."/>
            <person name="Schmid R."/>
            <person name="Altendorf K."/>
            <person name="Apte S.K."/>
        </authorList>
    </citation>
    <scope>PROTEIN SEQUENCE OF 149-162</scope>
    <source>
        <strain>ATCC 13939 / DSM 20539 / JCM 16871 / CCUG 27074 / LMG 4051 / NBRC 15346 / NCIMB 9279 / VKM B-1422 / R1</strain>
    </source>
</reference>
<dbReference type="EC" id="3.4.21.-"/>
<dbReference type="EMBL" id="AE001825">
    <property type="protein sequence ID" value="AAF12479.1"/>
    <property type="molecule type" value="Genomic_DNA"/>
</dbReference>
<dbReference type="PIR" id="A75582">
    <property type="entry name" value="A75582"/>
</dbReference>
<dbReference type="RefSeq" id="NP_285606.1">
    <property type="nucleotide sequence ID" value="NC_001264.1"/>
</dbReference>
<dbReference type="SMR" id="Q9RYM8"/>
<dbReference type="STRING" id="243230.DR_A0283"/>
<dbReference type="PaxDb" id="243230-DR_A0283"/>
<dbReference type="EnsemblBacteria" id="AAF12479">
    <property type="protein sequence ID" value="AAF12479"/>
    <property type="gene ID" value="DR_A0283"/>
</dbReference>
<dbReference type="KEGG" id="dra:DR_A0283"/>
<dbReference type="PATRIC" id="fig|243230.17.peg.3174"/>
<dbReference type="eggNOG" id="COG1404">
    <property type="taxonomic scope" value="Bacteria"/>
</dbReference>
<dbReference type="HOGENOM" id="CLU_380248_0_0_0"/>
<dbReference type="InParanoid" id="Q9RYM8"/>
<dbReference type="OrthoDB" id="52744at2"/>
<dbReference type="Proteomes" id="UP000002524">
    <property type="component" value="Chromosome 2"/>
</dbReference>
<dbReference type="GO" id="GO:0005576">
    <property type="term" value="C:extracellular region"/>
    <property type="evidence" value="ECO:0007669"/>
    <property type="project" value="UniProtKB-SubCell"/>
</dbReference>
<dbReference type="GO" id="GO:0004252">
    <property type="term" value="F:serine-type endopeptidase activity"/>
    <property type="evidence" value="ECO:0000318"/>
    <property type="project" value="GO_Central"/>
</dbReference>
<dbReference type="GO" id="GO:0006508">
    <property type="term" value="P:proteolysis"/>
    <property type="evidence" value="ECO:0007669"/>
    <property type="project" value="UniProtKB-KW"/>
</dbReference>
<dbReference type="CDD" id="cd07485">
    <property type="entry name" value="Peptidases_S8_Fervidolysin_like"/>
    <property type="match status" value="1"/>
</dbReference>
<dbReference type="Gene3D" id="2.60.120.380">
    <property type="match status" value="1"/>
</dbReference>
<dbReference type="Gene3D" id="2.60.40.10">
    <property type="entry name" value="Immunoglobulins"/>
    <property type="match status" value="1"/>
</dbReference>
<dbReference type="Gene3D" id="3.40.50.200">
    <property type="entry name" value="Peptidase S8/S53 domain"/>
    <property type="match status" value="1"/>
</dbReference>
<dbReference type="InterPro" id="IPR054399">
    <property type="entry name" value="Fervidolysin-like_N_prodom"/>
</dbReference>
<dbReference type="InterPro" id="IPR034063">
    <property type="entry name" value="Fervidolysin_dom"/>
</dbReference>
<dbReference type="InterPro" id="IPR013783">
    <property type="entry name" value="Ig-like_fold"/>
</dbReference>
<dbReference type="InterPro" id="IPR056489">
    <property type="entry name" value="Ig_Fls_DR_A0283-like"/>
</dbReference>
<dbReference type="InterPro" id="IPR007280">
    <property type="entry name" value="Peptidase_C_arc/bac"/>
</dbReference>
<dbReference type="InterPro" id="IPR000209">
    <property type="entry name" value="Peptidase_S8/S53_dom"/>
</dbReference>
<dbReference type="InterPro" id="IPR036852">
    <property type="entry name" value="Peptidase_S8/S53_dom_sf"/>
</dbReference>
<dbReference type="InterPro" id="IPR022398">
    <property type="entry name" value="Peptidase_S8_His-AS"/>
</dbReference>
<dbReference type="InterPro" id="IPR023828">
    <property type="entry name" value="Peptidase_S8_Ser-AS"/>
</dbReference>
<dbReference type="InterPro" id="IPR050131">
    <property type="entry name" value="Peptidase_S8_subtilisin-like"/>
</dbReference>
<dbReference type="InterPro" id="IPR015500">
    <property type="entry name" value="Peptidase_S8_subtilisin-rel"/>
</dbReference>
<dbReference type="InterPro" id="IPR017306">
    <property type="entry name" value="Peptidase_S8A_fervidolysi-like"/>
</dbReference>
<dbReference type="PANTHER" id="PTHR43806:SF11">
    <property type="entry name" value="CEREVISIN-RELATED"/>
    <property type="match status" value="1"/>
</dbReference>
<dbReference type="PANTHER" id="PTHR43806">
    <property type="entry name" value="PEPTIDASE S8"/>
    <property type="match status" value="1"/>
</dbReference>
<dbReference type="Pfam" id="PF22148">
    <property type="entry name" value="Fervidolysin_NPro-like"/>
    <property type="match status" value="1"/>
</dbReference>
<dbReference type="Pfam" id="PF24025">
    <property type="entry name" value="Ig_DR_A0283-like"/>
    <property type="match status" value="1"/>
</dbReference>
<dbReference type="Pfam" id="PF00082">
    <property type="entry name" value="Peptidase_S8"/>
    <property type="match status" value="1"/>
</dbReference>
<dbReference type="Pfam" id="PF04151">
    <property type="entry name" value="PPC"/>
    <property type="match status" value="1"/>
</dbReference>
<dbReference type="PIRSF" id="PIRSF037882">
    <property type="entry name" value="Subtilisin_rel_fervidolysin"/>
    <property type="match status" value="1"/>
</dbReference>
<dbReference type="PRINTS" id="PR00723">
    <property type="entry name" value="SUBTILISIN"/>
</dbReference>
<dbReference type="SUPFAM" id="SSF89260">
    <property type="entry name" value="Collagen-binding domain"/>
    <property type="match status" value="1"/>
</dbReference>
<dbReference type="SUPFAM" id="SSF117074">
    <property type="entry name" value="Hypothetical protein PA1324"/>
    <property type="match status" value="1"/>
</dbReference>
<dbReference type="SUPFAM" id="SSF52743">
    <property type="entry name" value="Subtilisin-like"/>
    <property type="match status" value="1"/>
</dbReference>
<dbReference type="PROSITE" id="PS51892">
    <property type="entry name" value="SUBTILASE"/>
    <property type="match status" value="1"/>
</dbReference>
<dbReference type="PROSITE" id="PS00137">
    <property type="entry name" value="SUBTILASE_HIS"/>
    <property type="match status" value="1"/>
</dbReference>
<dbReference type="PROSITE" id="PS00138">
    <property type="entry name" value="SUBTILASE_SER"/>
    <property type="match status" value="1"/>
</dbReference>
<accession>Q9RYM8</accession>